<protein>
    <recommendedName>
        <fullName evidence="1">Large ribosomal subunit protein uL4</fullName>
    </recommendedName>
    <alternativeName>
        <fullName evidence="3">50S ribosomal protein L4</fullName>
    </alternativeName>
</protein>
<sequence length="201" mass="22010">MELVMKDAPGALTVSETTFGRDFNEALVHQVVVAYAAGARQGTRAQKTRAEVTGSGKKPWRQKGTGRARAGSVKSPIWRSGGVTFAAKPQDHSQKVNKKMYRGALKSILSELVRQDRLIIVEKFSVEAPKTKLLAQKLKDMALEDVLIVTGELDENLFLAARNLYKVDVRDVAGIDPVSLIAFDKVVMTADAVKQVEEMLA</sequence>
<organism>
    <name type="scientific">Yersinia pseudotuberculosis serotype O:1b (strain IP 31758)</name>
    <dbReference type="NCBI Taxonomy" id="349747"/>
    <lineage>
        <taxon>Bacteria</taxon>
        <taxon>Pseudomonadati</taxon>
        <taxon>Pseudomonadota</taxon>
        <taxon>Gammaproteobacteria</taxon>
        <taxon>Enterobacterales</taxon>
        <taxon>Yersiniaceae</taxon>
        <taxon>Yersinia</taxon>
    </lineage>
</organism>
<reference key="1">
    <citation type="journal article" date="2007" name="PLoS Genet.">
        <title>The complete genome sequence of Yersinia pseudotuberculosis IP31758, the causative agent of Far East scarlet-like fever.</title>
        <authorList>
            <person name="Eppinger M."/>
            <person name="Rosovitz M.J."/>
            <person name="Fricke W.F."/>
            <person name="Rasko D.A."/>
            <person name="Kokorina G."/>
            <person name="Fayolle C."/>
            <person name="Lindler L.E."/>
            <person name="Carniel E."/>
            <person name="Ravel J."/>
        </authorList>
    </citation>
    <scope>NUCLEOTIDE SEQUENCE [LARGE SCALE GENOMIC DNA]</scope>
    <source>
        <strain>IP 31758</strain>
    </source>
</reference>
<dbReference type="EMBL" id="CP000720">
    <property type="protein sequence ID" value="ABS47246.1"/>
    <property type="molecule type" value="Genomic_DNA"/>
</dbReference>
<dbReference type="RefSeq" id="WP_002218934.1">
    <property type="nucleotide sequence ID" value="NC_009708.1"/>
</dbReference>
<dbReference type="SMR" id="A7FNN4"/>
<dbReference type="GeneID" id="96663195"/>
<dbReference type="KEGG" id="ypi:YpsIP31758_3914"/>
<dbReference type="HOGENOM" id="CLU_041575_5_2_6"/>
<dbReference type="Proteomes" id="UP000002412">
    <property type="component" value="Chromosome"/>
</dbReference>
<dbReference type="GO" id="GO:1990904">
    <property type="term" value="C:ribonucleoprotein complex"/>
    <property type="evidence" value="ECO:0007669"/>
    <property type="project" value="UniProtKB-KW"/>
</dbReference>
<dbReference type="GO" id="GO:0005840">
    <property type="term" value="C:ribosome"/>
    <property type="evidence" value="ECO:0007669"/>
    <property type="project" value="UniProtKB-KW"/>
</dbReference>
<dbReference type="GO" id="GO:0019843">
    <property type="term" value="F:rRNA binding"/>
    <property type="evidence" value="ECO:0007669"/>
    <property type="project" value="UniProtKB-UniRule"/>
</dbReference>
<dbReference type="GO" id="GO:0003735">
    <property type="term" value="F:structural constituent of ribosome"/>
    <property type="evidence" value="ECO:0007669"/>
    <property type="project" value="InterPro"/>
</dbReference>
<dbReference type="GO" id="GO:0006412">
    <property type="term" value="P:translation"/>
    <property type="evidence" value="ECO:0007669"/>
    <property type="project" value="UniProtKB-UniRule"/>
</dbReference>
<dbReference type="FunFam" id="3.40.1370.10:FF:000001">
    <property type="entry name" value="50S ribosomal protein L4"/>
    <property type="match status" value="1"/>
</dbReference>
<dbReference type="Gene3D" id="3.40.1370.10">
    <property type="match status" value="1"/>
</dbReference>
<dbReference type="HAMAP" id="MF_01328_B">
    <property type="entry name" value="Ribosomal_uL4_B"/>
    <property type="match status" value="1"/>
</dbReference>
<dbReference type="InterPro" id="IPR002136">
    <property type="entry name" value="Ribosomal_uL4"/>
</dbReference>
<dbReference type="InterPro" id="IPR013005">
    <property type="entry name" value="Ribosomal_uL4-like"/>
</dbReference>
<dbReference type="InterPro" id="IPR023574">
    <property type="entry name" value="Ribosomal_uL4_dom_sf"/>
</dbReference>
<dbReference type="NCBIfam" id="TIGR03953">
    <property type="entry name" value="rplD_bact"/>
    <property type="match status" value="1"/>
</dbReference>
<dbReference type="PANTHER" id="PTHR10746">
    <property type="entry name" value="50S RIBOSOMAL PROTEIN L4"/>
    <property type="match status" value="1"/>
</dbReference>
<dbReference type="PANTHER" id="PTHR10746:SF6">
    <property type="entry name" value="LARGE RIBOSOMAL SUBUNIT PROTEIN UL4M"/>
    <property type="match status" value="1"/>
</dbReference>
<dbReference type="Pfam" id="PF00573">
    <property type="entry name" value="Ribosomal_L4"/>
    <property type="match status" value="1"/>
</dbReference>
<dbReference type="SUPFAM" id="SSF52166">
    <property type="entry name" value="Ribosomal protein L4"/>
    <property type="match status" value="1"/>
</dbReference>
<keyword id="KW-0687">Ribonucleoprotein</keyword>
<keyword id="KW-0689">Ribosomal protein</keyword>
<keyword id="KW-0694">RNA-binding</keyword>
<keyword id="KW-0699">rRNA-binding</keyword>
<name>RL4_YERP3</name>
<accession>A7FNN4</accession>
<gene>
    <name evidence="1" type="primary">rplD</name>
    <name type="ordered locus">YpsIP31758_3914</name>
</gene>
<comment type="function">
    <text evidence="1">One of the primary rRNA binding proteins, this protein initially binds near the 5'-end of the 23S rRNA. It is important during the early stages of 50S assembly. It makes multiple contacts with different domains of the 23S rRNA in the assembled 50S subunit and ribosome.</text>
</comment>
<comment type="function">
    <text evidence="1">Forms part of the polypeptide exit tunnel.</text>
</comment>
<comment type="subunit">
    <text evidence="1">Part of the 50S ribosomal subunit.</text>
</comment>
<comment type="similarity">
    <text evidence="1">Belongs to the universal ribosomal protein uL4 family.</text>
</comment>
<proteinExistence type="inferred from homology"/>
<evidence type="ECO:0000255" key="1">
    <source>
        <dbReference type="HAMAP-Rule" id="MF_01328"/>
    </source>
</evidence>
<evidence type="ECO:0000256" key="2">
    <source>
        <dbReference type="SAM" id="MobiDB-lite"/>
    </source>
</evidence>
<evidence type="ECO:0000305" key="3"/>
<feature type="chain" id="PRO_1000067601" description="Large ribosomal subunit protein uL4">
    <location>
        <begin position="1"/>
        <end position="201"/>
    </location>
</feature>
<feature type="region of interest" description="Disordered" evidence="2">
    <location>
        <begin position="45"/>
        <end position="73"/>
    </location>
</feature>